<feature type="chain" id="PRO_1000075981" description="UDP-N-acetylglucosamine 1-carboxyvinyltransferase">
    <location>
        <begin position="1"/>
        <end position="419"/>
    </location>
</feature>
<feature type="active site" description="Proton donor" evidence="1">
    <location>
        <position position="115"/>
    </location>
</feature>
<feature type="binding site" evidence="1">
    <location>
        <begin position="22"/>
        <end position="23"/>
    </location>
    <ligand>
        <name>phosphoenolpyruvate</name>
        <dbReference type="ChEBI" id="CHEBI:58702"/>
    </ligand>
</feature>
<feature type="binding site" evidence="1">
    <location>
        <position position="91"/>
    </location>
    <ligand>
        <name>UDP-N-acetyl-alpha-D-glucosamine</name>
        <dbReference type="ChEBI" id="CHEBI:57705"/>
    </ligand>
</feature>
<feature type="binding site" evidence="1">
    <location>
        <begin position="120"/>
        <end position="124"/>
    </location>
    <ligand>
        <name>UDP-N-acetyl-alpha-D-glucosamine</name>
        <dbReference type="ChEBI" id="CHEBI:57705"/>
    </ligand>
</feature>
<feature type="binding site" evidence="1">
    <location>
        <begin position="160"/>
        <end position="163"/>
    </location>
    <ligand>
        <name>UDP-N-acetyl-alpha-D-glucosamine</name>
        <dbReference type="ChEBI" id="CHEBI:57705"/>
    </ligand>
</feature>
<feature type="binding site" evidence="1">
    <location>
        <position position="305"/>
    </location>
    <ligand>
        <name>UDP-N-acetyl-alpha-D-glucosamine</name>
        <dbReference type="ChEBI" id="CHEBI:57705"/>
    </ligand>
</feature>
<feature type="binding site" evidence="1">
    <location>
        <position position="327"/>
    </location>
    <ligand>
        <name>UDP-N-acetyl-alpha-D-glucosamine</name>
        <dbReference type="ChEBI" id="CHEBI:57705"/>
    </ligand>
</feature>
<feature type="modified residue" description="2-(S-cysteinyl)pyruvic acid O-phosphothioketal" evidence="1">
    <location>
        <position position="115"/>
    </location>
</feature>
<organism>
    <name type="scientific">Salmonella paratyphi B (strain ATCC BAA-1250 / SPB7)</name>
    <dbReference type="NCBI Taxonomy" id="1016998"/>
    <lineage>
        <taxon>Bacteria</taxon>
        <taxon>Pseudomonadati</taxon>
        <taxon>Pseudomonadota</taxon>
        <taxon>Gammaproteobacteria</taxon>
        <taxon>Enterobacterales</taxon>
        <taxon>Enterobacteriaceae</taxon>
        <taxon>Salmonella</taxon>
    </lineage>
</organism>
<name>MURA_SALPB</name>
<evidence type="ECO:0000255" key="1">
    <source>
        <dbReference type="HAMAP-Rule" id="MF_00111"/>
    </source>
</evidence>
<accession>A9N756</accession>
<keyword id="KW-0131">Cell cycle</keyword>
<keyword id="KW-0132">Cell division</keyword>
<keyword id="KW-0133">Cell shape</keyword>
<keyword id="KW-0961">Cell wall biogenesis/degradation</keyword>
<keyword id="KW-0963">Cytoplasm</keyword>
<keyword id="KW-0573">Peptidoglycan synthesis</keyword>
<keyword id="KW-0670">Pyruvate</keyword>
<keyword id="KW-0808">Transferase</keyword>
<protein>
    <recommendedName>
        <fullName evidence="1">UDP-N-acetylglucosamine 1-carboxyvinyltransferase</fullName>
        <ecNumber evidence="1">2.5.1.7</ecNumber>
    </recommendedName>
    <alternativeName>
        <fullName evidence="1">Enoylpyruvate transferase</fullName>
    </alternativeName>
    <alternativeName>
        <fullName evidence="1">UDP-N-acetylglucosamine enolpyruvyl transferase</fullName>
        <shortName evidence="1">EPT</shortName>
    </alternativeName>
</protein>
<dbReference type="EC" id="2.5.1.7" evidence="1"/>
<dbReference type="EMBL" id="CP000886">
    <property type="protein sequence ID" value="ABX69448.1"/>
    <property type="molecule type" value="Genomic_DNA"/>
</dbReference>
<dbReference type="RefSeq" id="WP_000357288.1">
    <property type="nucleotide sequence ID" value="NC_010102.1"/>
</dbReference>
<dbReference type="SMR" id="A9N756"/>
<dbReference type="KEGG" id="spq:SPAB_04124"/>
<dbReference type="PATRIC" id="fig|1016998.12.peg.3884"/>
<dbReference type="HOGENOM" id="CLU_027387_0_0_6"/>
<dbReference type="BioCyc" id="SENT1016998:SPAB_RS16760-MONOMER"/>
<dbReference type="UniPathway" id="UPA00219"/>
<dbReference type="Proteomes" id="UP000008556">
    <property type="component" value="Chromosome"/>
</dbReference>
<dbReference type="GO" id="GO:0005737">
    <property type="term" value="C:cytoplasm"/>
    <property type="evidence" value="ECO:0007669"/>
    <property type="project" value="UniProtKB-SubCell"/>
</dbReference>
<dbReference type="GO" id="GO:0008760">
    <property type="term" value="F:UDP-N-acetylglucosamine 1-carboxyvinyltransferase activity"/>
    <property type="evidence" value="ECO:0007669"/>
    <property type="project" value="UniProtKB-UniRule"/>
</dbReference>
<dbReference type="GO" id="GO:0051301">
    <property type="term" value="P:cell division"/>
    <property type="evidence" value="ECO:0007669"/>
    <property type="project" value="UniProtKB-KW"/>
</dbReference>
<dbReference type="GO" id="GO:0071555">
    <property type="term" value="P:cell wall organization"/>
    <property type="evidence" value="ECO:0007669"/>
    <property type="project" value="UniProtKB-KW"/>
</dbReference>
<dbReference type="GO" id="GO:0009252">
    <property type="term" value="P:peptidoglycan biosynthetic process"/>
    <property type="evidence" value="ECO:0007669"/>
    <property type="project" value="UniProtKB-UniRule"/>
</dbReference>
<dbReference type="GO" id="GO:0008360">
    <property type="term" value="P:regulation of cell shape"/>
    <property type="evidence" value="ECO:0007669"/>
    <property type="project" value="UniProtKB-KW"/>
</dbReference>
<dbReference type="GO" id="GO:0019277">
    <property type="term" value="P:UDP-N-acetylgalactosamine biosynthetic process"/>
    <property type="evidence" value="ECO:0007669"/>
    <property type="project" value="InterPro"/>
</dbReference>
<dbReference type="CDD" id="cd01555">
    <property type="entry name" value="UdpNAET"/>
    <property type="match status" value="1"/>
</dbReference>
<dbReference type="FunFam" id="3.65.10.10:FF:000002">
    <property type="entry name" value="UDP-N-acetylglucosamine 1-carboxyvinyltransferase"/>
    <property type="match status" value="1"/>
</dbReference>
<dbReference type="Gene3D" id="3.65.10.10">
    <property type="entry name" value="Enolpyruvate transferase domain"/>
    <property type="match status" value="2"/>
</dbReference>
<dbReference type="HAMAP" id="MF_00111">
    <property type="entry name" value="MurA"/>
    <property type="match status" value="1"/>
</dbReference>
<dbReference type="InterPro" id="IPR001986">
    <property type="entry name" value="Enolpyruvate_Tfrase_dom"/>
</dbReference>
<dbReference type="InterPro" id="IPR036968">
    <property type="entry name" value="Enolpyruvate_Tfrase_sf"/>
</dbReference>
<dbReference type="InterPro" id="IPR050068">
    <property type="entry name" value="MurA_subfamily"/>
</dbReference>
<dbReference type="InterPro" id="IPR013792">
    <property type="entry name" value="RNA3'P_cycl/enolpyr_Trfase_a/b"/>
</dbReference>
<dbReference type="InterPro" id="IPR005750">
    <property type="entry name" value="UDP_GlcNAc_COvinyl_MurA"/>
</dbReference>
<dbReference type="NCBIfam" id="TIGR01072">
    <property type="entry name" value="murA"/>
    <property type="match status" value="1"/>
</dbReference>
<dbReference type="NCBIfam" id="NF006873">
    <property type="entry name" value="PRK09369.1"/>
    <property type="match status" value="1"/>
</dbReference>
<dbReference type="PANTHER" id="PTHR43783">
    <property type="entry name" value="UDP-N-ACETYLGLUCOSAMINE 1-CARBOXYVINYLTRANSFERASE"/>
    <property type="match status" value="1"/>
</dbReference>
<dbReference type="PANTHER" id="PTHR43783:SF1">
    <property type="entry name" value="UDP-N-ACETYLGLUCOSAMINE 1-CARBOXYVINYLTRANSFERASE"/>
    <property type="match status" value="1"/>
</dbReference>
<dbReference type="Pfam" id="PF00275">
    <property type="entry name" value="EPSP_synthase"/>
    <property type="match status" value="1"/>
</dbReference>
<dbReference type="SUPFAM" id="SSF55205">
    <property type="entry name" value="EPT/RTPC-like"/>
    <property type="match status" value="1"/>
</dbReference>
<sequence>MDKFRVQGPTTLQGEVTISGAKNAALPILFAALLAEEPVEIQNVPKLKDVDTSMKLLSQLGAKVERNGSVHIDASQVNVFCAPYDLVKTMRASIWALGPLVARFGQGQVSLPGGCTIGARPVDLHITGLEQLGATIKLEEGYVKASVEGRLKGAHIVMDKVSVGATVTIMCAATLAEGTTIIENAAREPEIVDTANFLVTLGAKIAGQGTDRITIEGVERLGGGVYRVLPDRIETGTFLVAAAISRGKILCRNAQPDTLDAVLAKLRDAGADIEVGEDWISLDMHGKRPKAVNVRTAPHPAFPTDMQAQFTLLNLVAEGTGFITETVFENRFMHVPELSRMGARAEIESNTVICHGVETLSGAQVMATDLRASASLVLAGCIAEGTTIVDRIYHIDRGYERIEDKLRALGANIERVKGE</sequence>
<gene>
    <name evidence="1" type="primary">murA</name>
    <name type="ordered locus">SPAB_04124</name>
</gene>
<proteinExistence type="inferred from homology"/>
<reference key="1">
    <citation type="submission" date="2007-11" db="EMBL/GenBank/DDBJ databases">
        <authorList>
            <consortium name="The Salmonella enterica serovar Paratyphi B Genome Sequencing Project"/>
            <person name="McClelland M."/>
            <person name="Sanderson E.K."/>
            <person name="Porwollik S."/>
            <person name="Spieth J."/>
            <person name="Clifton W.S."/>
            <person name="Fulton R."/>
            <person name="Cordes M."/>
            <person name="Wollam A."/>
            <person name="Shah N."/>
            <person name="Pepin K."/>
            <person name="Bhonagiri V."/>
            <person name="Nash W."/>
            <person name="Johnson M."/>
            <person name="Thiruvilangam P."/>
            <person name="Wilson R."/>
        </authorList>
    </citation>
    <scope>NUCLEOTIDE SEQUENCE [LARGE SCALE GENOMIC DNA]</scope>
    <source>
        <strain>ATCC BAA-1250 / SPB7</strain>
    </source>
</reference>
<comment type="function">
    <text evidence="1">Cell wall formation. Adds enolpyruvyl to UDP-N-acetylglucosamine.</text>
</comment>
<comment type="catalytic activity">
    <reaction evidence="1">
        <text>phosphoenolpyruvate + UDP-N-acetyl-alpha-D-glucosamine = UDP-N-acetyl-3-O-(1-carboxyvinyl)-alpha-D-glucosamine + phosphate</text>
        <dbReference type="Rhea" id="RHEA:18681"/>
        <dbReference type="ChEBI" id="CHEBI:43474"/>
        <dbReference type="ChEBI" id="CHEBI:57705"/>
        <dbReference type="ChEBI" id="CHEBI:58702"/>
        <dbReference type="ChEBI" id="CHEBI:68483"/>
        <dbReference type="EC" id="2.5.1.7"/>
    </reaction>
</comment>
<comment type="pathway">
    <text evidence="1">Cell wall biogenesis; peptidoglycan biosynthesis.</text>
</comment>
<comment type="subcellular location">
    <subcellularLocation>
        <location evidence="1">Cytoplasm</location>
    </subcellularLocation>
</comment>
<comment type="similarity">
    <text evidence="1">Belongs to the EPSP synthase family. MurA subfamily.</text>
</comment>